<protein>
    <recommendedName>
        <fullName evidence="1">Uracil-DNA glycosylase</fullName>
        <shortName evidence="1">UDG</shortName>
        <ecNumber evidence="1">3.2.2.27</ecNumber>
    </recommendedName>
</protein>
<feature type="chain" id="PRO_0000176139" description="Uracil-DNA glycosylase">
    <location>
        <begin position="1"/>
        <end position="218"/>
    </location>
</feature>
<feature type="active site" description="Proton acceptor" evidence="1">
    <location>
        <position position="59"/>
    </location>
</feature>
<feature type="helix" evidence="2">
    <location>
        <begin position="3"/>
        <end position="13"/>
    </location>
</feature>
<feature type="helix" evidence="2">
    <location>
        <begin position="17"/>
        <end position="29"/>
    </location>
</feature>
<feature type="strand" evidence="2">
    <location>
        <begin position="32"/>
        <end position="34"/>
    </location>
</feature>
<feature type="helix" evidence="2">
    <location>
        <begin position="36"/>
        <end position="38"/>
    </location>
</feature>
<feature type="helix" evidence="2">
    <location>
        <begin position="41"/>
        <end position="45"/>
    </location>
</feature>
<feature type="helix" evidence="2">
    <location>
        <begin position="48"/>
        <end position="50"/>
    </location>
</feature>
<feature type="strand" evidence="2">
    <location>
        <begin position="53"/>
        <end position="57"/>
    </location>
</feature>
<feature type="turn" evidence="2">
    <location>
        <begin position="64"/>
        <end position="66"/>
    </location>
</feature>
<feature type="strand" evidence="2">
    <location>
        <begin position="68"/>
        <end position="70"/>
    </location>
</feature>
<feature type="helix" evidence="2">
    <location>
        <begin position="82"/>
        <end position="94"/>
    </location>
</feature>
<feature type="helix" evidence="2">
    <location>
        <begin position="105"/>
        <end position="110"/>
    </location>
</feature>
<feature type="strand" evidence="2">
    <location>
        <begin position="112"/>
        <end position="118"/>
    </location>
</feature>
<feature type="turn" evidence="2">
    <location>
        <begin position="126"/>
        <end position="131"/>
    </location>
</feature>
<feature type="helix" evidence="2">
    <location>
        <begin position="134"/>
        <end position="148"/>
    </location>
</feature>
<feature type="strand" evidence="2">
    <location>
        <begin position="153"/>
        <end position="158"/>
    </location>
</feature>
<feature type="helix" evidence="2">
    <location>
        <begin position="159"/>
        <end position="162"/>
    </location>
</feature>
<feature type="helix" evidence="2">
    <location>
        <begin position="163"/>
        <end position="167"/>
    </location>
</feature>
<feature type="turn" evidence="2">
    <location>
        <begin position="170"/>
        <end position="172"/>
    </location>
</feature>
<feature type="strand" evidence="2">
    <location>
        <begin position="173"/>
        <end position="178"/>
    </location>
</feature>
<feature type="turn" evidence="2">
    <location>
        <begin position="183"/>
        <end position="185"/>
    </location>
</feature>
<feature type="helix" evidence="2">
    <location>
        <begin position="186"/>
        <end position="190"/>
    </location>
</feature>
<feature type="helix" evidence="2">
    <location>
        <begin position="195"/>
        <end position="205"/>
    </location>
</feature>
<comment type="function">
    <text evidence="1">Excises uracil residues from the DNA which can arise as a result of misincorporation of dUMP residues by DNA polymerase or due to deamination of cytosine.</text>
</comment>
<comment type="catalytic activity">
    <reaction evidence="1">
        <text>Hydrolyzes single-stranded DNA or mismatched double-stranded DNA and polynucleotides, releasing free uracil.</text>
        <dbReference type="EC" id="3.2.2.27"/>
    </reaction>
</comment>
<comment type="subcellular location">
    <subcellularLocation>
        <location evidence="1">Cytoplasm</location>
    </subcellularLocation>
</comment>
<comment type="similarity">
    <text evidence="1">Belongs to the uracil-DNA glycosylase (UDG) superfamily. UNG family.</text>
</comment>
<name>UNG_STAAR</name>
<proteinExistence type="evidence at protein level"/>
<accession>Q6GJ88</accession>
<reference key="1">
    <citation type="journal article" date="2004" name="Proc. Natl. Acad. Sci. U.S.A.">
        <title>Complete genomes of two clinical Staphylococcus aureus strains: evidence for the rapid evolution of virulence and drug resistance.</title>
        <authorList>
            <person name="Holden M.T.G."/>
            <person name="Feil E.J."/>
            <person name="Lindsay J.A."/>
            <person name="Peacock S.J."/>
            <person name="Day N.P.J."/>
            <person name="Enright M.C."/>
            <person name="Foster T.J."/>
            <person name="Moore C.E."/>
            <person name="Hurst L."/>
            <person name="Atkin R."/>
            <person name="Barron A."/>
            <person name="Bason N."/>
            <person name="Bentley S.D."/>
            <person name="Chillingworth C."/>
            <person name="Chillingworth T."/>
            <person name="Churcher C."/>
            <person name="Clark L."/>
            <person name="Corton C."/>
            <person name="Cronin A."/>
            <person name="Doggett J."/>
            <person name="Dowd L."/>
            <person name="Feltwell T."/>
            <person name="Hance Z."/>
            <person name="Harris B."/>
            <person name="Hauser H."/>
            <person name="Holroyd S."/>
            <person name="Jagels K."/>
            <person name="James K.D."/>
            <person name="Lennard N."/>
            <person name="Line A."/>
            <person name="Mayes R."/>
            <person name="Moule S."/>
            <person name="Mungall K."/>
            <person name="Ormond D."/>
            <person name="Quail M.A."/>
            <person name="Rabbinowitsch E."/>
            <person name="Rutherford K.M."/>
            <person name="Sanders M."/>
            <person name="Sharp S."/>
            <person name="Simmonds M."/>
            <person name="Stevens K."/>
            <person name="Whitehead S."/>
            <person name="Barrell B.G."/>
            <person name="Spratt B.G."/>
            <person name="Parkhill J."/>
        </authorList>
    </citation>
    <scope>NUCLEOTIDE SEQUENCE [LARGE SCALE GENOMIC DNA]</scope>
    <source>
        <strain>MRSA252</strain>
    </source>
</reference>
<evidence type="ECO:0000255" key="1">
    <source>
        <dbReference type="HAMAP-Rule" id="MF_00148"/>
    </source>
</evidence>
<evidence type="ECO:0007829" key="2">
    <source>
        <dbReference type="PDB" id="3WDF"/>
    </source>
</evidence>
<organism>
    <name type="scientific">Staphylococcus aureus (strain MRSA252)</name>
    <dbReference type="NCBI Taxonomy" id="282458"/>
    <lineage>
        <taxon>Bacteria</taxon>
        <taxon>Bacillati</taxon>
        <taxon>Bacillota</taxon>
        <taxon>Bacilli</taxon>
        <taxon>Bacillales</taxon>
        <taxon>Staphylococcaceae</taxon>
        <taxon>Staphylococcus</taxon>
    </lineage>
</organism>
<sequence>MEWSQIFHDITTKHDFKAMHDFLEKEYSTAIVYPDRENIYQAFDLTPFENIKVVILGQDPYHGPNQAHGLAFSVQPNAKFPPSLRNMYKELADDIGCVRQTPHLQDWAREGVLLLNTVLTVRQGEANSHRDIGWETFTDEIIKAVSDYKEHVVFILWGKPAQQKIKLIDTSKHCIIKSVHPSPLSAYRGFFGSKPYSKANTYLESVGKSPINWCESEA</sequence>
<gene>
    <name evidence="1" type="primary">ung</name>
    <name type="ordered locus">SAR0586</name>
</gene>
<dbReference type="EC" id="3.2.2.27" evidence="1"/>
<dbReference type="EMBL" id="BX571856">
    <property type="protein sequence ID" value="CAG39606.1"/>
    <property type="molecule type" value="Genomic_DNA"/>
</dbReference>
<dbReference type="RefSeq" id="WP_000455258.1">
    <property type="nucleotide sequence ID" value="NC_002952.2"/>
</dbReference>
<dbReference type="PDB" id="3WDF">
    <property type="method" value="X-ray"/>
    <property type="resolution" value="1.48 A"/>
    <property type="chains" value="A/B=1-218"/>
</dbReference>
<dbReference type="PDB" id="3WDG">
    <property type="method" value="X-ray"/>
    <property type="resolution" value="2.20 A"/>
    <property type="chains" value="A=1-218"/>
</dbReference>
<dbReference type="PDBsum" id="3WDF"/>
<dbReference type="PDBsum" id="3WDG"/>
<dbReference type="SMR" id="Q6GJ88"/>
<dbReference type="KEGG" id="sar:SAR0586"/>
<dbReference type="HOGENOM" id="CLU_032162_3_1_9"/>
<dbReference type="EvolutionaryTrace" id="Q6GJ88"/>
<dbReference type="Proteomes" id="UP000000596">
    <property type="component" value="Chromosome"/>
</dbReference>
<dbReference type="GO" id="GO:0005737">
    <property type="term" value="C:cytoplasm"/>
    <property type="evidence" value="ECO:0007669"/>
    <property type="project" value="UniProtKB-SubCell"/>
</dbReference>
<dbReference type="GO" id="GO:0004844">
    <property type="term" value="F:uracil DNA N-glycosylase activity"/>
    <property type="evidence" value="ECO:0007669"/>
    <property type="project" value="UniProtKB-UniRule"/>
</dbReference>
<dbReference type="GO" id="GO:0097510">
    <property type="term" value="P:base-excision repair, AP site formation via deaminated base removal"/>
    <property type="evidence" value="ECO:0007669"/>
    <property type="project" value="TreeGrafter"/>
</dbReference>
<dbReference type="CDD" id="cd10027">
    <property type="entry name" value="UDG-F1-like"/>
    <property type="match status" value="1"/>
</dbReference>
<dbReference type="FunFam" id="3.40.470.10:FF:000001">
    <property type="entry name" value="Uracil-DNA glycosylase"/>
    <property type="match status" value="1"/>
</dbReference>
<dbReference type="Gene3D" id="3.40.470.10">
    <property type="entry name" value="Uracil-DNA glycosylase-like domain"/>
    <property type="match status" value="1"/>
</dbReference>
<dbReference type="HAMAP" id="MF_00148">
    <property type="entry name" value="UDG"/>
    <property type="match status" value="1"/>
</dbReference>
<dbReference type="InterPro" id="IPR002043">
    <property type="entry name" value="UDG_fam1"/>
</dbReference>
<dbReference type="InterPro" id="IPR018085">
    <property type="entry name" value="Ura-DNA_Glyclase_AS"/>
</dbReference>
<dbReference type="InterPro" id="IPR005122">
    <property type="entry name" value="Uracil-DNA_glycosylase-like"/>
</dbReference>
<dbReference type="InterPro" id="IPR036895">
    <property type="entry name" value="Uracil-DNA_glycosylase-like_sf"/>
</dbReference>
<dbReference type="NCBIfam" id="NF003588">
    <property type="entry name" value="PRK05254.1-1"/>
    <property type="match status" value="1"/>
</dbReference>
<dbReference type="NCBIfam" id="NF003589">
    <property type="entry name" value="PRK05254.1-2"/>
    <property type="match status" value="1"/>
</dbReference>
<dbReference type="NCBIfam" id="NF003591">
    <property type="entry name" value="PRK05254.1-4"/>
    <property type="match status" value="1"/>
</dbReference>
<dbReference type="NCBIfam" id="NF003592">
    <property type="entry name" value="PRK05254.1-5"/>
    <property type="match status" value="1"/>
</dbReference>
<dbReference type="NCBIfam" id="TIGR00628">
    <property type="entry name" value="ung"/>
    <property type="match status" value="1"/>
</dbReference>
<dbReference type="PANTHER" id="PTHR11264">
    <property type="entry name" value="URACIL-DNA GLYCOSYLASE"/>
    <property type="match status" value="1"/>
</dbReference>
<dbReference type="PANTHER" id="PTHR11264:SF0">
    <property type="entry name" value="URACIL-DNA GLYCOSYLASE"/>
    <property type="match status" value="1"/>
</dbReference>
<dbReference type="Pfam" id="PF03167">
    <property type="entry name" value="UDG"/>
    <property type="match status" value="1"/>
</dbReference>
<dbReference type="SMART" id="SM00986">
    <property type="entry name" value="UDG"/>
    <property type="match status" value="1"/>
</dbReference>
<dbReference type="SMART" id="SM00987">
    <property type="entry name" value="UreE_C"/>
    <property type="match status" value="1"/>
</dbReference>
<dbReference type="SUPFAM" id="SSF52141">
    <property type="entry name" value="Uracil-DNA glycosylase-like"/>
    <property type="match status" value="1"/>
</dbReference>
<dbReference type="PROSITE" id="PS00130">
    <property type="entry name" value="U_DNA_GLYCOSYLASE"/>
    <property type="match status" value="1"/>
</dbReference>
<keyword id="KW-0002">3D-structure</keyword>
<keyword id="KW-0963">Cytoplasm</keyword>
<keyword id="KW-0227">DNA damage</keyword>
<keyword id="KW-0234">DNA repair</keyword>
<keyword id="KW-0378">Hydrolase</keyword>